<evidence type="ECO:0000250" key="1"/>
<evidence type="ECO:0000255" key="2"/>
<evidence type="ECO:0000269" key="3">
    <source>
    </source>
</evidence>
<evidence type="ECO:0000269" key="4">
    <source>
    </source>
</evidence>
<evidence type="ECO:0000305" key="5"/>
<proteinExistence type="evidence at protein level"/>
<comment type="function">
    <text evidence="3 4">Negatively regulates leptin receptor (LEPR) cell surface expression, and thus decreases response to leptin. Negatively regulates growth hormone (GH) receptor cell surface expression in liver. May play a role in liver resistance to GH during periods of reduced nutrient availability.</text>
</comment>
<comment type="subunit">
    <text evidence="1">Interacts with LEPR. Interacts with RAB13 (By similarity).</text>
</comment>
<comment type="interaction">
    <interactant intactId="EBI-15672507">
        <id>O15243</id>
    </interactant>
    <interactant intactId="EBI-13059134">
        <id>Q13520</id>
        <label>AQP6</label>
    </interactant>
    <organismsDiffer>false</organismsDiffer>
    <experiments>3</experiments>
</comment>
<comment type="interaction">
    <interactant intactId="EBI-15672507">
        <id>O15243</id>
    </interactant>
    <interactant intactId="EBI-750433">
        <id>P36382</id>
        <label>GJA5</label>
    </interactant>
    <organismsDiffer>false</organismsDiffer>
    <experiments>3</experiments>
</comment>
<comment type="interaction">
    <interactant intactId="EBI-15672507">
        <id>O15243</id>
    </interactant>
    <interactant intactId="EBI-518596">
        <id>P48357</id>
        <label>LEPR</label>
    </interactant>
    <organismsDiffer>false</organismsDiffer>
    <experiments>2</experiments>
</comment>
<comment type="interaction">
    <interactant intactId="EBI-15672507">
        <id>O15243</id>
    </interactant>
    <interactant intactId="EBI-18063495">
        <id>Q8TBJ4</id>
        <label>PLPPR1</label>
    </interactant>
    <organismsDiffer>false</organismsDiffer>
    <experiments>3</experiments>
</comment>
<comment type="interaction">
    <interactant intactId="EBI-15672507">
        <id>O15243</id>
    </interactant>
    <interactant intactId="EBI-15853497">
        <id>Q9UBD6</id>
        <label>RHCG</label>
    </interactant>
    <organismsDiffer>false</organismsDiffer>
    <experiments>3</experiments>
</comment>
<comment type="interaction">
    <interactant intactId="EBI-15672507">
        <id>O15243</id>
    </interactant>
    <interactant intactId="EBI-4289564">
        <id>P30825</id>
        <label>SLC7A1</label>
    </interactant>
    <organismsDiffer>false</organismsDiffer>
    <experiments>3</experiments>
</comment>
<comment type="interaction">
    <interactant intactId="EBI-15672507">
        <id>O15243</id>
    </interactant>
    <interactant intactId="EBI-12187159">
        <id>O43759-2</id>
        <label>SYNGR1</label>
    </interactant>
    <organismsDiffer>false</organismsDiffer>
    <experiments>3</experiments>
</comment>
<comment type="interaction">
    <interactant intactId="EBI-15672507">
        <id>O15243</id>
    </interactant>
    <interactant intactId="EBI-727322">
        <id>Q9BXJ8</id>
        <label>TMEM120A</label>
    </interactant>
    <organismsDiffer>false</organismsDiffer>
    <experiments>3</experiments>
</comment>
<comment type="interaction">
    <interactant intactId="EBI-15672507">
        <id>O15243</id>
    </interactant>
    <interactant intactId="EBI-12903814">
        <id>O95807</id>
        <label>TMEM50A</label>
    </interactant>
    <organismsDiffer>false</organismsDiffer>
    <experiments>3</experiments>
</comment>
<comment type="interaction">
    <interactant intactId="EBI-15672507">
        <id>O15243</id>
    </interactant>
    <interactant intactId="EBI-12366453">
        <id>P56557</id>
        <label>TMEM50B</label>
    </interactant>
    <organismsDiffer>false</organismsDiffer>
    <experiments>3</experiments>
</comment>
<comment type="interaction">
    <interactant intactId="EBI-15672507">
        <id>O15243</id>
    </interactant>
    <interactant intactId="EBI-6447886">
        <id>Q9Y320</id>
        <label>TMX2</label>
    </interactant>
    <organismsDiffer>false</organismsDiffer>
    <experiments>3</experiments>
</comment>
<comment type="interaction">
    <interactant intactId="EBI-15672507">
        <id>O15243</id>
    </interactant>
    <interactant intactId="EBI-7850136">
        <id>Q9Y548</id>
        <label>YIPF1</label>
    </interactant>
    <organismsDiffer>false</organismsDiffer>
    <experiments>3</experiments>
</comment>
<comment type="subcellular location">
    <subcellularLocation>
        <location evidence="1">Golgi apparatus membrane</location>
        <topology evidence="1">Multi-pass membrane protein</topology>
    </subcellularLocation>
    <subcellularLocation>
        <location evidence="1">Endosome membrane</location>
    </subcellularLocation>
</comment>
<comment type="tissue specificity">
    <text>Expressed at the highest levels in heart and placenta and at a lesser extent in lung, liver, skeletal muscle, kidney and pancreas.</text>
</comment>
<comment type="similarity">
    <text evidence="5">Belongs to the OB-RGRP/VPS55 family.</text>
</comment>
<comment type="caution">
    <text evidence="5">This protein is encoded by LEPR gene, but shares with LEPR only the first two 5'-UTR exons. It therefore does not share any sequence similarity with LEPR.</text>
</comment>
<organism>
    <name type="scientific">Homo sapiens</name>
    <name type="common">Human</name>
    <dbReference type="NCBI Taxonomy" id="9606"/>
    <lineage>
        <taxon>Eukaryota</taxon>
        <taxon>Metazoa</taxon>
        <taxon>Chordata</taxon>
        <taxon>Craniata</taxon>
        <taxon>Vertebrata</taxon>
        <taxon>Euteleostomi</taxon>
        <taxon>Mammalia</taxon>
        <taxon>Eutheria</taxon>
        <taxon>Euarchontoglires</taxon>
        <taxon>Primates</taxon>
        <taxon>Haplorrhini</taxon>
        <taxon>Catarrhini</taxon>
        <taxon>Hominidae</taxon>
        <taxon>Homo</taxon>
    </lineage>
</organism>
<feature type="chain" id="PRO_0000215194" description="Leptin receptor gene-related protein">
    <location>
        <begin position="1"/>
        <end position="131"/>
    </location>
</feature>
<feature type="transmembrane region" description="Helical" evidence="2">
    <location>
        <begin position="7"/>
        <end position="27"/>
    </location>
</feature>
<feature type="transmembrane region" description="Helical" evidence="2">
    <location>
        <begin position="32"/>
        <end position="52"/>
    </location>
</feature>
<feature type="transmembrane region" description="Helical" evidence="2">
    <location>
        <begin position="69"/>
        <end position="89"/>
    </location>
</feature>
<feature type="transmembrane region" description="Helical" evidence="2">
    <location>
        <begin position="100"/>
        <end position="120"/>
    </location>
</feature>
<protein>
    <recommendedName>
        <fullName>Leptin receptor gene-related protein</fullName>
    </recommendedName>
    <alternativeName>
        <fullName>Endospanin-1</fullName>
    </alternativeName>
    <alternativeName>
        <fullName>Leptin receptor overlapping transcript protein</fullName>
    </alternativeName>
    <alternativeName>
        <fullName>OB-R gene-related protein</fullName>
        <shortName>OB-RGRP</shortName>
    </alternativeName>
</protein>
<name>OBRG_HUMAN</name>
<gene>
    <name type="primary">LEPROT</name>
    <name type="synonym">LEPR</name>
    <name type="synonym">OBR</name>
</gene>
<reference key="1">
    <citation type="journal article" date="1997" name="Nucleic Acids Res.">
        <title>The leptin receptor promoter controls expression of a second distinct protein.</title>
        <authorList>
            <person name="Bailleul B."/>
            <person name="Akerblom I."/>
            <person name="Strosberg A.D."/>
        </authorList>
    </citation>
    <scope>NUCLEOTIDE SEQUENCE [MRNA]</scope>
</reference>
<reference key="2">
    <citation type="submission" date="2004-06" db="EMBL/GenBank/DDBJ databases">
        <title>Cloning of human full open reading frames in Gateway(TM) system entry vector (pDONR201).</title>
        <authorList>
            <person name="Halleck A."/>
            <person name="Ebert L."/>
            <person name="Mkoundinya M."/>
            <person name="Schick M."/>
            <person name="Eisenstein S."/>
            <person name="Neubert P."/>
            <person name="Kstrang K."/>
            <person name="Schatten R."/>
            <person name="Shen B."/>
            <person name="Henze S."/>
            <person name="Mar W."/>
            <person name="Korn B."/>
            <person name="Zuo D."/>
            <person name="Hu Y."/>
            <person name="LaBaer J."/>
        </authorList>
    </citation>
    <scope>NUCLEOTIDE SEQUENCE [LARGE SCALE MRNA]</scope>
</reference>
<reference key="3">
    <citation type="journal article" date="2005" name="DNA Res.">
        <title>Signal sequence and keyword trap in silico for selection of full-length human cDNAs encoding secretion or membrane proteins from oligo-capped cDNA libraries.</title>
        <authorList>
            <person name="Otsuki T."/>
            <person name="Ota T."/>
            <person name="Nishikawa T."/>
            <person name="Hayashi K."/>
            <person name="Suzuki Y."/>
            <person name="Yamamoto J."/>
            <person name="Wakamatsu A."/>
            <person name="Kimura K."/>
            <person name="Sakamoto K."/>
            <person name="Hatano N."/>
            <person name="Kawai Y."/>
            <person name="Ishii S."/>
            <person name="Saito K."/>
            <person name="Kojima S."/>
            <person name="Sugiyama T."/>
            <person name="Ono T."/>
            <person name="Okano K."/>
            <person name="Yoshikawa Y."/>
            <person name="Aotsuka S."/>
            <person name="Sasaki N."/>
            <person name="Hattori A."/>
            <person name="Okumura K."/>
            <person name="Nagai K."/>
            <person name="Sugano S."/>
            <person name="Isogai T."/>
        </authorList>
    </citation>
    <scope>NUCLEOTIDE SEQUENCE [LARGE SCALE MRNA]</scope>
    <source>
        <tissue>Teratocarcinoma</tissue>
    </source>
</reference>
<reference key="4">
    <citation type="journal article" date="2006" name="Nature">
        <title>The DNA sequence and biological annotation of human chromosome 1.</title>
        <authorList>
            <person name="Gregory S.G."/>
            <person name="Barlow K.F."/>
            <person name="McLay K.E."/>
            <person name="Kaul R."/>
            <person name="Swarbreck D."/>
            <person name="Dunham A."/>
            <person name="Scott C.E."/>
            <person name="Howe K.L."/>
            <person name="Woodfine K."/>
            <person name="Spencer C.C.A."/>
            <person name="Jones M.C."/>
            <person name="Gillson C."/>
            <person name="Searle S."/>
            <person name="Zhou Y."/>
            <person name="Kokocinski F."/>
            <person name="McDonald L."/>
            <person name="Evans R."/>
            <person name="Phillips K."/>
            <person name="Atkinson A."/>
            <person name="Cooper R."/>
            <person name="Jones C."/>
            <person name="Hall R.E."/>
            <person name="Andrews T.D."/>
            <person name="Lloyd C."/>
            <person name="Ainscough R."/>
            <person name="Almeida J.P."/>
            <person name="Ambrose K.D."/>
            <person name="Anderson F."/>
            <person name="Andrew R.W."/>
            <person name="Ashwell R.I.S."/>
            <person name="Aubin K."/>
            <person name="Babbage A.K."/>
            <person name="Bagguley C.L."/>
            <person name="Bailey J."/>
            <person name="Beasley H."/>
            <person name="Bethel G."/>
            <person name="Bird C.P."/>
            <person name="Bray-Allen S."/>
            <person name="Brown J.Y."/>
            <person name="Brown A.J."/>
            <person name="Buckley D."/>
            <person name="Burton J."/>
            <person name="Bye J."/>
            <person name="Carder C."/>
            <person name="Chapman J.C."/>
            <person name="Clark S.Y."/>
            <person name="Clarke G."/>
            <person name="Clee C."/>
            <person name="Cobley V."/>
            <person name="Collier R.E."/>
            <person name="Corby N."/>
            <person name="Coville G.J."/>
            <person name="Davies J."/>
            <person name="Deadman R."/>
            <person name="Dunn M."/>
            <person name="Earthrowl M."/>
            <person name="Ellington A.G."/>
            <person name="Errington H."/>
            <person name="Frankish A."/>
            <person name="Frankland J."/>
            <person name="French L."/>
            <person name="Garner P."/>
            <person name="Garnett J."/>
            <person name="Gay L."/>
            <person name="Ghori M.R.J."/>
            <person name="Gibson R."/>
            <person name="Gilby L.M."/>
            <person name="Gillett W."/>
            <person name="Glithero R.J."/>
            <person name="Grafham D.V."/>
            <person name="Griffiths C."/>
            <person name="Griffiths-Jones S."/>
            <person name="Grocock R."/>
            <person name="Hammond S."/>
            <person name="Harrison E.S.I."/>
            <person name="Hart E."/>
            <person name="Haugen E."/>
            <person name="Heath P.D."/>
            <person name="Holmes S."/>
            <person name="Holt K."/>
            <person name="Howden P.J."/>
            <person name="Hunt A.R."/>
            <person name="Hunt S.E."/>
            <person name="Hunter G."/>
            <person name="Isherwood J."/>
            <person name="James R."/>
            <person name="Johnson C."/>
            <person name="Johnson D."/>
            <person name="Joy A."/>
            <person name="Kay M."/>
            <person name="Kershaw J.K."/>
            <person name="Kibukawa M."/>
            <person name="Kimberley A.M."/>
            <person name="King A."/>
            <person name="Knights A.J."/>
            <person name="Lad H."/>
            <person name="Laird G."/>
            <person name="Lawlor S."/>
            <person name="Leongamornlert D.A."/>
            <person name="Lloyd D.M."/>
            <person name="Loveland J."/>
            <person name="Lovell J."/>
            <person name="Lush M.J."/>
            <person name="Lyne R."/>
            <person name="Martin S."/>
            <person name="Mashreghi-Mohammadi M."/>
            <person name="Matthews L."/>
            <person name="Matthews N.S.W."/>
            <person name="McLaren S."/>
            <person name="Milne S."/>
            <person name="Mistry S."/>
            <person name="Moore M.J.F."/>
            <person name="Nickerson T."/>
            <person name="O'Dell C.N."/>
            <person name="Oliver K."/>
            <person name="Palmeiri A."/>
            <person name="Palmer S.A."/>
            <person name="Parker A."/>
            <person name="Patel D."/>
            <person name="Pearce A.V."/>
            <person name="Peck A.I."/>
            <person name="Pelan S."/>
            <person name="Phelps K."/>
            <person name="Phillimore B.J."/>
            <person name="Plumb R."/>
            <person name="Rajan J."/>
            <person name="Raymond C."/>
            <person name="Rouse G."/>
            <person name="Saenphimmachak C."/>
            <person name="Sehra H.K."/>
            <person name="Sheridan E."/>
            <person name="Shownkeen R."/>
            <person name="Sims S."/>
            <person name="Skuce C.D."/>
            <person name="Smith M."/>
            <person name="Steward C."/>
            <person name="Subramanian S."/>
            <person name="Sycamore N."/>
            <person name="Tracey A."/>
            <person name="Tromans A."/>
            <person name="Van Helmond Z."/>
            <person name="Wall M."/>
            <person name="Wallis J.M."/>
            <person name="White S."/>
            <person name="Whitehead S.L."/>
            <person name="Wilkinson J.E."/>
            <person name="Willey D.L."/>
            <person name="Williams H."/>
            <person name="Wilming L."/>
            <person name="Wray P.W."/>
            <person name="Wu Z."/>
            <person name="Coulson A."/>
            <person name="Vaudin M."/>
            <person name="Sulston J.E."/>
            <person name="Durbin R.M."/>
            <person name="Hubbard T."/>
            <person name="Wooster R."/>
            <person name="Dunham I."/>
            <person name="Carter N.P."/>
            <person name="McVean G."/>
            <person name="Ross M.T."/>
            <person name="Harrow J."/>
            <person name="Olson M.V."/>
            <person name="Beck S."/>
            <person name="Rogers J."/>
            <person name="Bentley D.R."/>
        </authorList>
    </citation>
    <scope>NUCLEOTIDE SEQUENCE [LARGE SCALE GENOMIC DNA]</scope>
</reference>
<reference key="5">
    <citation type="submission" date="2005-09" db="EMBL/GenBank/DDBJ databases">
        <authorList>
            <person name="Mural R.J."/>
            <person name="Istrail S."/>
            <person name="Sutton G.G."/>
            <person name="Florea L."/>
            <person name="Halpern A.L."/>
            <person name="Mobarry C.M."/>
            <person name="Lippert R."/>
            <person name="Walenz B."/>
            <person name="Shatkay H."/>
            <person name="Dew I."/>
            <person name="Miller J.R."/>
            <person name="Flanigan M.J."/>
            <person name="Edwards N.J."/>
            <person name="Bolanos R."/>
            <person name="Fasulo D."/>
            <person name="Halldorsson B.V."/>
            <person name="Hannenhalli S."/>
            <person name="Turner R."/>
            <person name="Yooseph S."/>
            <person name="Lu F."/>
            <person name="Nusskern D.R."/>
            <person name="Shue B.C."/>
            <person name="Zheng X.H."/>
            <person name="Zhong F."/>
            <person name="Delcher A.L."/>
            <person name="Huson D.H."/>
            <person name="Kravitz S.A."/>
            <person name="Mouchard L."/>
            <person name="Reinert K."/>
            <person name="Remington K.A."/>
            <person name="Clark A.G."/>
            <person name="Waterman M.S."/>
            <person name="Eichler E.E."/>
            <person name="Adams M.D."/>
            <person name="Hunkapiller M.W."/>
            <person name="Myers E.W."/>
            <person name="Venter J.C."/>
        </authorList>
    </citation>
    <scope>NUCLEOTIDE SEQUENCE [LARGE SCALE GENOMIC DNA]</scope>
</reference>
<reference key="6">
    <citation type="journal article" date="2004" name="Genome Res.">
        <title>The status, quality, and expansion of the NIH full-length cDNA project: the Mammalian Gene Collection (MGC).</title>
        <authorList>
            <consortium name="The MGC Project Team"/>
        </authorList>
    </citation>
    <scope>NUCLEOTIDE SEQUENCE [LARGE SCALE MRNA]</scope>
    <source>
        <tissue>Prostate</tissue>
        <tissue>Skeletal muscle</tissue>
    </source>
</reference>
<reference key="7">
    <citation type="journal article" date="2007" name="Proc. Natl. Acad. Sci. U.S.A.">
        <title>Silencing of OB-RGRP in mouse hypothalamic arcuate nucleus increases leptin receptor signaling and prevents diet-induced obesity.</title>
        <authorList>
            <person name="Couturier C."/>
            <person name="Sarkis C."/>
            <person name="Seron K."/>
            <person name="Belouzard S."/>
            <person name="Chen P."/>
            <person name="Lenain A."/>
            <person name="Corset L."/>
            <person name="Dam J."/>
            <person name="Vauthier V."/>
            <person name="Dubart A."/>
            <person name="Mallet J."/>
            <person name="Froguel P."/>
            <person name="Rouille Y."/>
            <person name="Jockers R."/>
        </authorList>
    </citation>
    <scope>FUNCTION</scope>
</reference>
<reference key="8">
    <citation type="journal article" date="2009" name="J. Clin. Invest.">
        <title>LEPROT and LEPROTL1 cooperatively decrease hepatic growth hormone action in mice.</title>
        <authorList>
            <person name="Touvier T."/>
            <person name="Conte-Auriol F."/>
            <person name="Briand O."/>
            <person name="Cudejko C."/>
            <person name="Paumelle R."/>
            <person name="Caron S."/>
            <person name="Bauge E."/>
            <person name="Rouille Y."/>
            <person name="Salles J.P."/>
            <person name="Staels B."/>
            <person name="Bailleul B."/>
        </authorList>
    </citation>
    <scope>FUNCTION</scope>
</reference>
<accession>O15243</accession>
<accession>Q6FHL5</accession>
<keyword id="KW-0967">Endosome</keyword>
<keyword id="KW-0333">Golgi apparatus</keyword>
<keyword id="KW-0472">Membrane</keyword>
<keyword id="KW-1267">Proteomics identification</keyword>
<keyword id="KW-1185">Reference proteome</keyword>
<keyword id="KW-0812">Transmembrane</keyword>
<keyword id="KW-1133">Transmembrane helix</keyword>
<sequence length="131" mass="14254">MAGVKALVALSFSGAIGLTFLMLGCALEDYGVYWPLFVLIFHAISPIPHFIAKRVTYDSDATSSACRELAYFFTTGIVVSAFGFPVILARVAVIKWGACGLVLAGNAVIFLTIQGFFLIFGRGDDFSWEQW</sequence>
<dbReference type="EMBL" id="Y12670">
    <property type="protein sequence ID" value="CAA73211.1"/>
    <property type="molecule type" value="mRNA"/>
</dbReference>
<dbReference type="EMBL" id="CR541647">
    <property type="protein sequence ID" value="CAG46448.1"/>
    <property type="molecule type" value="mRNA"/>
</dbReference>
<dbReference type="EMBL" id="CR541737">
    <property type="protein sequence ID" value="CAG46537.1"/>
    <property type="molecule type" value="mRNA"/>
</dbReference>
<dbReference type="EMBL" id="AK074841">
    <property type="protein sequence ID" value="BAG52014.1"/>
    <property type="molecule type" value="mRNA"/>
</dbReference>
<dbReference type="EMBL" id="AC119800">
    <property type="status" value="NOT_ANNOTATED_CDS"/>
    <property type="molecule type" value="Genomic_DNA"/>
</dbReference>
<dbReference type="EMBL" id="CH471059">
    <property type="protein sequence ID" value="EAX06527.1"/>
    <property type="molecule type" value="Genomic_DNA"/>
</dbReference>
<dbReference type="EMBL" id="CH471059">
    <property type="protein sequence ID" value="EAX06531.1"/>
    <property type="molecule type" value="Genomic_DNA"/>
</dbReference>
<dbReference type="EMBL" id="BC011027">
    <property type="protein sequence ID" value="AAH11027.2"/>
    <property type="molecule type" value="mRNA"/>
</dbReference>
<dbReference type="EMBL" id="BC056250">
    <property type="protein sequence ID" value="AAH56250.1"/>
    <property type="molecule type" value="mRNA"/>
</dbReference>
<dbReference type="CCDS" id="CCDS630.1"/>
<dbReference type="RefSeq" id="NP_001185612.1">
    <property type="nucleotide sequence ID" value="NM_001198683.1"/>
</dbReference>
<dbReference type="RefSeq" id="NP_059996.1">
    <property type="nucleotide sequence ID" value="NM_017526.5"/>
</dbReference>
<dbReference type="BioGRID" id="120123">
    <property type="interactions" value="14"/>
</dbReference>
<dbReference type="DIP" id="DIP-29969N"/>
<dbReference type="FunCoup" id="O15243">
    <property type="interactions" value="1780"/>
</dbReference>
<dbReference type="IntAct" id="O15243">
    <property type="interactions" value="14"/>
</dbReference>
<dbReference type="MINT" id="O15243"/>
<dbReference type="STRING" id="9606.ENSP00000483521"/>
<dbReference type="iPTMnet" id="O15243"/>
<dbReference type="SwissPalm" id="O15243"/>
<dbReference type="BioMuta" id="LEPROT"/>
<dbReference type="jPOST" id="O15243"/>
<dbReference type="MassIVE" id="O15243"/>
<dbReference type="PaxDb" id="9606-ENSP00000483521"/>
<dbReference type="PeptideAtlas" id="O15243"/>
<dbReference type="ProteomicsDB" id="48532"/>
<dbReference type="Pumba" id="O15243"/>
<dbReference type="Antibodypedia" id="67309">
    <property type="antibodies" value="8 antibodies from 6 providers"/>
</dbReference>
<dbReference type="DNASU" id="54741"/>
<dbReference type="Ensembl" id="ENST00000371065.9">
    <property type="protein sequence ID" value="ENSP00000360104.4"/>
    <property type="gene ID" value="ENSG00000213625.9"/>
</dbReference>
<dbReference type="GeneID" id="54741"/>
<dbReference type="KEGG" id="hsa:54741"/>
<dbReference type="MANE-Select" id="ENST00000371065.9">
    <property type="protein sequence ID" value="ENSP00000360104.4"/>
    <property type="RefSeq nucleotide sequence ID" value="NM_017526.5"/>
    <property type="RefSeq protein sequence ID" value="NP_059996.1"/>
</dbReference>
<dbReference type="UCSC" id="uc001dcf.4">
    <property type="organism name" value="human"/>
</dbReference>
<dbReference type="AGR" id="HGNC:29477"/>
<dbReference type="CTD" id="54741"/>
<dbReference type="DisGeNET" id="54741"/>
<dbReference type="GeneCards" id="LEPROT"/>
<dbReference type="HGNC" id="HGNC:29477">
    <property type="gene designation" value="LEPROT"/>
</dbReference>
<dbReference type="HPA" id="ENSG00000213625">
    <property type="expression patterns" value="Low tissue specificity"/>
</dbReference>
<dbReference type="MalaCards" id="LEPROT"/>
<dbReference type="MIM" id="613461">
    <property type="type" value="gene"/>
</dbReference>
<dbReference type="neXtProt" id="NX_O15243"/>
<dbReference type="OpenTargets" id="ENSG00000213625"/>
<dbReference type="PharmGKB" id="PA134913422"/>
<dbReference type="VEuPathDB" id="HostDB:ENSG00000213625"/>
<dbReference type="eggNOG" id="KOG2174">
    <property type="taxonomic scope" value="Eukaryota"/>
</dbReference>
<dbReference type="GeneTree" id="ENSGT00390000006503"/>
<dbReference type="HOGENOM" id="CLU_134810_2_2_1"/>
<dbReference type="InParanoid" id="O15243"/>
<dbReference type="OMA" id="RSHVDMT"/>
<dbReference type="OrthoDB" id="14246at2759"/>
<dbReference type="PAN-GO" id="O15243">
    <property type="GO annotations" value="3 GO annotations based on evolutionary models"/>
</dbReference>
<dbReference type="PhylomeDB" id="O15243"/>
<dbReference type="TreeFam" id="TF313689"/>
<dbReference type="PathwayCommons" id="O15243"/>
<dbReference type="SignaLink" id="O15243"/>
<dbReference type="BioGRID-ORCS" id="54741">
    <property type="hits" value="15 hits in 1150 CRISPR screens"/>
</dbReference>
<dbReference type="ChiTaRS" id="LEPROT">
    <property type="organism name" value="human"/>
</dbReference>
<dbReference type="GenomeRNAi" id="54741"/>
<dbReference type="Pharos" id="O15243">
    <property type="development level" value="Tbio"/>
</dbReference>
<dbReference type="PRO" id="PR:O15243"/>
<dbReference type="Proteomes" id="UP000005640">
    <property type="component" value="Chromosome 1"/>
</dbReference>
<dbReference type="RNAct" id="O15243">
    <property type="molecule type" value="protein"/>
</dbReference>
<dbReference type="Bgee" id="ENSG00000213625">
    <property type="expression patterns" value="Expressed in metanephric glomerulus and 218 other cell types or tissues"/>
</dbReference>
<dbReference type="ExpressionAtlas" id="O15243">
    <property type="expression patterns" value="baseline and differential"/>
</dbReference>
<dbReference type="GO" id="GO:0005768">
    <property type="term" value="C:endosome"/>
    <property type="evidence" value="ECO:0000314"/>
    <property type="project" value="UniProtKB"/>
</dbReference>
<dbReference type="GO" id="GO:0010008">
    <property type="term" value="C:endosome membrane"/>
    <property type="evidence" value="ECO:0007669"/>
    <property type="project" value="UniProtKB-SubCell"/>
</dbReference>
<dbReference type="GO" id="GO:0005794">
    <property type="term" value="C:Golgi apparatus"/>
    <property type="evidence" value="ECO:0000314"/>
    <property type="project" value="UniProtKB"/>
</dbReference>
<dbReference type="GO" id="GO:0000139">
    <property type="term" value="C:Golgi membrane"/>
    <property type="evidence" value="ECO:0007669"/>
    <property type="project" value="UniProtKB-SubCell"/>
</dbReference>
<dbReference type="GO" id="GO:0005102">
    <property type="term" value="F:signaling receptor binding"/>
    <property type="evidence" value="ECO:0000314"/>
    <property type="project" value="UniProtKB"/>
</dbReference>
<dbReference type="GO" id="GO:0032511">
    <property type="term" value="P:late endosome to vacuole transport via multivesicular body sorting pathway"/>
    <property type="evidence" value="ECO:0000318"/>
    <property type="project" value="GO_Central"/>
</dbReference>
<dbReference type="GO" id="GO:0060400">
    <property type="term" value="P:negative regulation of growth hormone receptor signaling pathway"/>
    <property type="evidence" value="ECO:0000314"/>
    <property type="project" value="UniProtKB"/>
</dbReference>
<dbReference type="GO" id="GO:2000009">
    <property type="term" value="P:negative regulation of protein localization to cell surface"/>
    <property type="evidence" value="ECO:0000314"/>
    <property type="project" value="UniProtKB"/>
</dbReference>
<dbReference type="GO" id="GO:0046426">
    <property type="term" value="P:negative regulation of receptor signaling pathway via JAK-STAT"/>
    <property type="evidence" value="ECO:0000314"/>
    <property type="project" value="UniProtKB"/>
</dbReference>
<dbReference type="GO" id="GO:1903955">
    <property type="term" value="P:positive regulation of protein targeting to mitochondrion"/>
    <property type="evidence" value="ECO:0007001"/>
    <property type="project" value="ParkinsonsUK-UCL"/>
</dbReference>
<dbReference type="InterPro" id="IPR007262">
    <property type="entry name" value="Vps55/LEPROT"/>
</dbReference>
<dbReference type="PANTHER" id="PTHR12050:SF3">
    <property type="entry name" value="LEPTIN RECEPTOR GENE-RELATED PROTEIN"/>
    <property type="match status" value="1"/>
</dbReference>
<dbReference type="PANTHER" id="PTHR12050">
    <property type="entry name" value="LEPTIN RECEPTOR-RELATED"/>
    <property type="match status" value="1"/>
</dbReference>
<dbReference type="Pfam" id="PF04133">
    <property type="entry name" value="Vps55"/>
    <property type="match status" value="1"/>
</dbReference>